<proteinExistence type="inferred from homology"/>
<evidence type="ECO:0000250" key="1"/>
<evidence type="ECO:0000305" key="2"/>
<protein>
    <recommendedName>
        <fullName>Putative 1-aminocyclopropane-1-carboxylate deaminase</fullName>
        <shortName>ACC deaminase</shortName>
        <ecNumber>3.5.99.7</ecNumber>
    </recommendedName>
</protein>
<organism>
    <name type="scientific">Pyrococcus abyssi (strain GE5 / Orsay)</name>
    <dbReference type="NCBI Taxonomy" id="272844"/>
    <lineage>
        <taxon>Archaea</taxon>
        <taxon>Methanobacteriati</taxon>
        <taxon>Methanobacteriota</taxon>
        <taxon>Thermococci</taxon>
        <taxon>Thermococcales</taxon>
        <taxon>Thermococcaceae</taxon>
        <taxon>Pyrococcus</taxon>
    </lineage>
</organism>
<sequence length="330" mass="35755">MHPKVDALLSRFPRITLIPWETPIQYLPRISRELGVDVYVKRDDLTGLGIGGNKIRKLEFLLGDALSRGCDTVITIGAVHSNHAFVTALAAKKLGLGAVLILRGEEVLKGNYLLDKLMGIETRIYEADNSWELMKVAEEVAEELKGEGKKPYIIPPGGASPVGTLGYIRGVGELYTQVKKLGLRIDTVVDAVGSGGTYAGLLLGSAIVNAEWSVVGIDVSSATEKAKERVKNLVEKTKELLGINVKVQEPRIYDYGFGAYGKIVKEVAKLIKSVGTMEGLLLDPVYTGKAFYGLMDLAKKGDLGESVLFIHTGGLPGIFHYGEEMLELLV</sequence>
<keyword id="KW-0378">Hydrolase</keyword>
<keyword id="KW-0663">Pyridoxal phosphate</keyword>
<name>1A1D_PYRAB</name>
<reference key="1">
    <citation type="journal article" date="2003" name="Mol. Microbiol.">
        <title>An integrated analysis of the genome of the hyperthermophilic archaeon Pyrococcus abyssi.</title>
        <authorList>
            <person name="Cohen G.N."/>
            <person name="Barbe V."/>
            <person name="Flament D."/>
            <person name="Galperin M."/>
            <person name="Heilig R."/>
            <person name="Lecompte O."/>
            <person name="Poch O."/>
            <person name="Prieur D."/>
            <person name="Querellou J."/>
            <person name="Ripp R."/>
            <person name="Thierry J.-C."/>
            <person name="Van der Oost J."/>
            <person name="Weissenbach J."/>
            <person name="Zivanovic Y."/>
            <person name="Forterre P."/>
        </authorList>
    </citation>
    <scope>NUCLEOTIDE SEQUENCE [LARGE SCALE GENOMIC DNA]</scope>
    <source>
        <strain>GE5 / Orsay</strain>
    </source>
</reference>
<reference key="2">
    <citation type="journal article" date="2012" name="Curr. Microbiol.">
        <title>Re-annotation of two hyperthermophilic archaea Pyrococcus abyssi GE5 and Pyrococcus furiosus DSM 3638.</title>
        <authorList>
            <person name="Gao J."/>
            <person name="Wang J."/>
        </authorList>
    </citation>
    <scope>GENOME REANNOTATION</scope>
    <source>
        <strain>GE5 / Orsay</strain>
    </source>
</reference>
<feature type="chain" id="PRO_0000184521" description="Putative 1-aminocyclopropane-1-carboxylate deaminase">
    <location>
        <begin position="1"/>
        <end position="330"/>
    </location>
</feature>
<feature type="modified residue" description="N6-(pyridoxal phosphate)lysine" evidence="1">
    <location>
        <position position="54"/>
    </location>
</feature>
<comment type="catalytic activity">
    <reaction>
        <text>1-aminocyclopropane-1-carboxylate + H2O = 2-oxobutanoate + NH4(+)</text>
        <dbReference type="Rhea" id="RHEA:16933"/>
        <dbReference type="ChEBI" id="CHEBI:15377"/>
        <dbReference type="ChEBI" id="CHEBI:16763"/>
        <dbReference type="ChEBI" id="CHEBI:28938"/>
        <dbReference type="ChEBI" id="CHEBI:58360"/>
        <dbReference type="EC" id="3.5.99.7"/>
    </reaction>
</comment>
<comment type="cofactor">
    <cofactor evidence="1">
        <name>pyridoxal 5'-phosphate</name>
        <dbReference type="ChEBI" id="CHEBI:597326"/>
    </cofactor>
</comment>
<comment type="similarity">
    <text evidence="2">Belongs to the ACC deaminase/D-cysteine desulfhydrase family.</text>
</comment>
<dbReference type="EC" id="3.5.99.7"/>
<dbReference type="EMBL" id="AJ248283">
    <property type="protein sequence ID" value="CAB48986.1"/>
    <property type="molecule type" value="Genomic_DNA"/>
</dbReference>
<dbReference type="EMBL" id="HE613800">
    <property type="protein sequence ID" value="CCE69435.1"/>
    <property type="molecule type" value="Genomic_DNA"/>
</dbReference>
<dbReference type="PIR" id="C75192">
    <property type="entry name" value="C75192"/>
</dbReference>
<dbReference type="RefSeq" id="WP_010867187.1">
    <property type="nucleotide sequence ID" value="NC_000868.1"/>
</dbReference>
<dbReference type="SMR" id="Q9V2L2"/>
<dbReference type="STRING" id="272844.PAB2303"/>
<dbReference type="KEGG" id="pab:PAB2303"/>
<dbReference type="PATRIC" id="fig|272844.11.peg.70"/>
<dbReference type="eggNOG" id="arCOG01435">
    <property type="taxonomic scope" value="Archaea"/>
</dbReference>
<dbReference type="HOGENOM" id="CLU_048897_1_0_2"/>
<dbReference type="OrthoDB" id="371827at2157"/>
<dbReference type="PhylomeDB" id="Q9V2L2"/>
<dbReference type="Proteomes" id="UP000000810">
    <property type="component" value="Chromosome"/>
</dbReference>
<dbReference type="Proteomes" id="UP000009139">
    <property type="component" value="Chromosome"/>
</dbReference>
<dbReference type="GO" id="GO:0008660">
    <property type="term" value="F:1-aminocyclopropane-1-carboxylate deaminase activity"/>
    <property type="evidence" value="ECO:0007669"/>
    <property type="project" value="UniProtKB-EC"/>
</dbReference>
<dbReference type="GO" id="GO:0019148">
    <property type="term" value="F:D-cysteine desulfhydrase activity"/>
    <property type="evidence" value="ECO:0007669"/>
    <property type="project" value="TreeGrafter"/>
</dbReference>
<dbReference type="Gene3D" id="3.40.50.1100">
    <property type="match status" value="2"/>
</dbReference>
<dbReference type="InterPro" id="IPR027278">
    <property type="entry name" value="ACCD_DCysDesulf"/>
</dbReference>
<dbReference type="InterPro" id="IPR005966">
    <property type="entry name" value="D-Cys_desShydrase"/>
</dbReference>
<dbReference type="InterPro" id="IPR001926">
    <property type="entry name" value="TrpB-like_PALP"/>
</dbReference>
<dbReference type="InterPro" id="IPR036052">
    <property type="entry name" value="TrpB-like_PALP_sf"/>
</dbReference>
<dbReference type="NCBIfam" id="TIGR01275">
    <property type="entry name" value="ACC_deam_rel"/>
    <property type="match status" value="1"/>
</dbReference>
<dbReference type="NCBIfam" id="NF010646">
    <property type="entry name" value="PRK14045.1"/>
    <property type="match status" value="1"/>
</dbReference>
<dbReference type="PANTHER" id="PTHR43780">
    <property type="entry name" value="1-AMINOCYCLOPROPANE-1-CARBOXYLATE DEAMINASE-RELATED"/>
    <property type="match status" value="1"/>
</dbReference>
<dbReference type="PANTHER" id="PTHR43780:SF2">
    <property type="entry name" value="1-AMINOCYCLOPROPANE-1-CARBOXYLATE DEAMINASE-RELATED"/>
    <property type="match status" value="1"/>
</dbReference>
<dbReference type="Pfam" id="PF00291">
    <property type="entry name" value="PALP"/>
    <property type="match status" value="1"/>
</dbReference>
<dbReference type="PIRSF" id="PIRSF006278">
    <property type="entry name" value="ACCD_DCysDesulf"/>
    <property type="match status" value="1"/>
</dbReference>
<dbReference type="SUPFAM" id="SSF53686">
    <property type="entry name" value="Tryptophan synthase beta subunit-like PLP-dependent enzymes"/>
    <property type="match status" value="1"/>
</dbReference>
<accession>Q9V2L2</accession>
<accession>G8ZFP4</accession>
<gene>
    <name type="ordered locus">PYRAB00630</name>
    <name type="ORF">PAB2303</name>
</gene>